<sequence>MSTDCAGNSTCPVNSTEEDPPVGMEGHANLKLLFTVLSAVMVGLVMFSFGCSVESQKLWLHLRRPWGIAVGLLSQFGLMPLTAYLLAIGFGLKPFQAIAVLMMGSCPGGTISNVLTFWVDGDMDLSISMTTCSTVAALGMMPLCLYIYTRSWTLTQNLVIPYQSIGITLVSLVVPVASGVYVNYRWPKQATVILKVGAILGGMLLLVVAVTGMVLAKGWNTDVTLLVISCIFPLVGHVTGFLLAFLTHQSWQRCRTISIETGAQNIQLCIAMLQLSFSAEYLVQLLNFALAYGLFQVLHGLLIVAAYQAYKRRQKSKCRRQHPDCPDVCYEKQPRETSAFLDKGDEAAVTLGPVQPEQHHRAAELTSHIPSCE</sequence>
<dbReference type="EMBL" id="AJ583504">
    <property type="protein sequence ID" value="CAE47479.1"/>
    <property type="molecule type" value="mRNA"/>
</dbReference>
<dbReference type="EMBL" id="AK018423">
    <property type="protein sequence ID" value="BAB31203.1"/>
    <property type="molecule type" value="mRNA"/>
</dbReference>
<dbReference type="EMBL" id="BC127608">
    <property type="protein sequence ID" value="AAI27609.1"/>
    <property type="molecule type" value="mRNA"/>
</dbReference>
<dbReference type="EMBL" id="BC139343">
    <property type="protein sequence ID" value="AAI39344.1"/>
    <property type="molecule type" value="mRNA"/>
</dbReference>
<dbReference type="EMBL" id="BC139346">
    <property type="protein sequence ID" value="AAI39347.1"/>
    <property type="molecule type" value="mRNA"/>
</dbReference>
<dbReference type="CCDS" id="CCDS19477.1"/>
<dbReference type="RefSeq" id="NP_083691.1">
    <property type="nucleotide sequence ID" value="NM_029415.3"/>
</dbReference>
<dbReference type="SMR" id="Q9CXB2"/>
<dbReference type="FunCoup" id="Q9CXB2">
    <property type="interactions" value="57"/>
</dbReference>
<dbReference type="STRING" id="10090.ENSMUSP00000031263"/>
<dbReference type="GlyCosmos" id="Q9CXB2">
    <property type="glycosylation" value="2 sites, No reported glycans"/>
</dbReference>
<dbReference type="GlyGen" id="Q9CXB2">
    <property type="glycosylation" value="2 sites"/>
</dbReference>
<dbReference type="PaxDb" id="10090-ENSMUSP00000031263"/>
<dbReference type="ProteomicsDB" id="261396"/>
<dbReference type="Antibodypedia" id="14387">
    <property type="antibodies" value="39 antibodies from 12 providers"/>
</dbReference>
<dbReference type="DNASU" id="75750"/>
<dbReference type="Ensembl" id="ENSMUST00000031263.2">
    <property type="protein sequence ID" value="ENSMUSP00000031263.2"/>
    <property type="gene ID" value="ENSMUSG00000029321.2"/>
</dbReference>
<dbReference type="GeneID" id="75750"/>
<dbReference type="KEGG" id="mmu:75750"/>
<dbReference type="UCSC" id="uc008yjp.1">
    <property type="organism name" value="mouse"/>
</dbReference>
<dbReference type="AGR" id="MGI:1923000"/>
<dbReference type="CTD" id="345274"/>
<dbReference type="MGI" id="MGI:1923000">
    <property type="gene designation" value="Slc10a6"/>
</dbReference>
<dbReference type="VEuPathDB" id="HostDB:ENSMUSG00000029321"/>
<dbReference type="eggNOG" id="KOG2718">
    <property type="taxonomic scope" value="Eukaryota"/>
</dbReference>
<dbReference type="GeneTree" id="ENSGT00950000182808"/>
<dbReference type="HOGENOM" id="CLU_034788_7_5_1"/>
<dbReference type="InParanoid" id="Q9CXB2"/>
<dbReference type="OMA" id="CLYLYTW"/>
<dbReference type="OrthoDB" id="203097at2759"/>
<dbReference type="PhylomeDB" id="Q9CXB2"/>
<dbReference type="TreeFam" id="TF315811"/>
<dbReference type="Reactome" id="R-MMU-425366">
    <property type="pathway name" value="Transport of bile salts and organic acids, metal ions and amine compounds"/>
</dbReference>
<dbReference type="BioGRID-ORCS" id="75750">
    <property type="hits" value="2 hits in 77 CRISPR screens"/>
</dbReference>
<dbReference type="ChiTaRS" id="Slc10a6">
    <property type="organism name" value="mouse"/>
</dbReference>
<dbReference type="PRO" id="PR:Q9CXB2"/>
<dbReference type="Proteomes" id="UP000000589">
    <property type="component" value="Chromosome 5"/>
</dbReference>
<dbReference type="RNAct" id="Q9CXB2">
    <property type="molecule type" value="protein"/>
</dbReference>
<dbReference type="Bgee" id="ENSMUSG00000029321">
    <property type="expression patterns" value="Expressed in right lung lobe and 101 other cell types or tissues"/>
</dbReference>
<dbReference type="GO" id="GO:0016020">
    <property type="term" value="C:membrane"/>
    <property type="evidence" value="ECO:0007669"/>
    <property type="project" value="UniProtKB-SubCell"/>
</dbReference>
<dbReference type="GO" id="GO:0043250">
    <property type="term" value="F:sodium-dependent organic anion transmembrane transporter activity"/>
    <property type="evidence" value="ECO:0007669"/>
    <property type="project" value="Ensembl"/>
</dbReference>
<dbReference type="GO" id="GO:0015293">
    <property type="term" value="F:symporter activity"/>
    <property type="evidence" value="ECO:0007669"/>
    <property type="project" value="UniProtKB-KW"/>
</dbReference>
<dbReference type="GO" id="GO:0006869">
    <property type="term" value="P:lipid transport"/>
    <property type="evidence" value="ECO:0007669"/>
    <property type="project" value="UniProtKB-KW"/>
</dbReference>
<dbReference type="GO" id="GO:0006814">
    <property type="term" value="P:sodium ion transport"/>
    <property type="evidence" value="ECO:0007669"/>
    <property type="project" value="UniProtKB-KW"/>
</dbReference>
<dbReference type="GO" id="GO:0043251">
    <property type="term" value="P:sodium-dependent organic anion transport"/>
    <property type="evidence" value="ECO:0007669"/>
    <property type="project" value="Ensembl"/>
</dbReference>
<dbReference type="FunFam" id="1.20.1530.20:FF:000010">
    <property type="entry name" value="Solute carrier family 10 member 6"/>
    <property type="match status" value="1"/>
</dbReference>
<dbReference type="Gene3D" id="1.20.1530.20">
    <property type="match status" value="1"/>
</dbReference>
<dbReference type="InterPro" id="IPR002657">
    <property type="entry name" value="BilAc:Na_symport/Acr3"/>
</dbReference>
<dbReference type="InterPro" id="IPR004710">
    <property type="entry name" value="Bilac:Na_transpt"/>
</dbReference>
<dbReference type="InterPro" id="IPR038770">
    <property type="entry name" value="Na+/solute_symporter_sf"/>
</dbReference>
<dbReference type="PANTHER" id="PTHR10361">
    <property type="entry name" value="SODIUM-BILE ACID COTRANSPORTER"/>
    <property type="match status" value="1"/>
</dbReference>
<dbReference type="PANTHER" id="PTHR10361:SF55">
    <property type="entry name" value="SODIUM-DEPENDENT ORGANIC ANION TRANSPORTER"/>
    <property type="match status" value="1"/>
</dbReference>
<dbReference type="Pfam" id="PF01758">
    <property type="entry name" value="SBF"/>
    <property type="match status" value="1"/>
</dbReference>
<gene>
    <name type="primary">Slc10a6</name>
    <name type="synonym">Soat</name>
</gene>
<name>SOAT_MOUSE</name>
<protein>
    <recommendedName>
        <fullName evidence="7">Sodium-dependent organic anion transporter</fullName>
        <shortName evidence="7">SOAT</shortName>
    </recommendedName>
    <alternativeName>
        <fullName>Solute carrier family 10 member 6</fullName>
        <shortName evidence="7">SLC10A6</shortName>
    </alternativeName>
</protein>
<keyword id="KW-0325">Glycoprotein</keyword>
<keyword id="KW-0406">Ion transport</keyword>
<keyword id="KW-0445">Lipid transport</keyword>
<keyword id="KW-0472">Membrane</keyword>
<keyword id="KW-1185">Reference proteome</keyword>
<keyword id="KW-0915">Sodium</keyword>
<keyword id="KW-0739">Sodium transport</keyword>
<keyword id="KW-0769">Symport</keyword>
<keyword id="KW-0812">Transmembrane</keyword>
<keyword id="KW-1133">Transmembrane helix</keyword>
<keyword id="KW-0813">Transport</keyword>
<organism>
    <name type="scientific">Mus musculus</name>
    <name type="common">Mouse</name>
    <dbReference type="NCBI Taxonomy" id="10090"/>
    <lineage>
        <taxon>Eukaryota</taxon>
        <taxon>Metazoa</taxon>
        <taxon>Chordata</taxon>
        <taxon>Craniata</taxon>
        <taxon>Vertebrata</taxon>
        <taxon>Euteleostomi</taxon>
        <taxon>Mammalia</taxon>
        <taxon>Eutheria</taxon>
        <taxon>Euarchontoglires</taxon>
        <taxon>Glires</taxon>
        <taxon>Rodentia</taxon>
        <taxon>Myomorpha</taxon>
        <taxon>Muroidea</taxon>
        <taxon>Muridae</taxon>
        <taxon>Murinae</taxon>
        <taxon>Mus</taxon>
        <taxon>Mus</taxon>
    </lineage>
</organism>
<accession>Q9CXB2</accession>
<accession>B2RTH4</accession>
<evidence type="ECO:0000250" key="1"/>
<evidence type="ECO:0000250" key="2">
    <source>
        <dbReference type="UniProtKB" id="Q3KNW5"/>
    </source>
</evidence>
<evidence type="ECO:0000255" key="3"/>
<evidence type="ECO:0000256" key="4">
    <source>
        <dbReference type="SAM" id="MobiDB-lite"/>
    </source>
</evidence>
<evidence type="ECO:0000269" key="5">
    <source>
    </source>
</evidence>
<evidence type="ECO:0000269" key="6">
    <source>
    </source>
</evidence>
<evidence type="ECO:0000303" key="7">
    <source>
    </source>
</evidence>
<evidence type="ECO:0000305" key="8"/>
<proteinExistence type="evidence at protein level"/>
<comment type="function">
    <text evidence="2 5">Transports sulfoconjugated steroid hormones from the extracellular compartment into the cytosol in a sodium-dependent manner without hydrolysis (PubMed:23562556). Steroid sulfate hormones are commonly considered to be biologically inactive metabolites, that may be activated by steroid sulfatases into free steroids (By similarity). May play an important role by delivering sulfoconjugated steroids to specific target cells in reproductive organs (PubMed:23562556). May play a role transporting the estriol precursor 16alpha-hydroxydehydroepiandrosterone 3-sulfate (16a-OH-DHEAS) at the fetal blood vessel endothelium (By similarity). Can also transport other sulfoconjugated molecules such as taurolithocholic acid-3-sulfate and sulfoconjugated pyrenes (By similarity).</text>
</comment>
<comment type="catalytic activity">
    <reaction evidence="5">
        <text>estrone 3-sulfate(out) + 2 Na(+)(out) = estrone 3-sulfate(in) + 2 Na(+)(in)</text>
        <dbReference type="Rhea" id="RHEA:71083"/>
        <dbReference type="ChEBI" id="CHEBI:29101"/>
        <dbReference type="ChEBI" id="CHEBI:60050"/>
    </reaction>
</comment>
<comment type="catalytic activity">
    <reaction evidence="2">
        <text>17beta-estradiol 3-sulfate(out) + 2 Na(+)(out) = 17beta-estradiol 3-sulfate(in) + 2 Na(+)(in)</text>
        <dbReference type="Rhea" id="RHEA:71087"/>
        <dbReference type="ChEBI" id="CHEBI:29101"/>
        <dbReference type="ChEBI" id="CHEBI:136582"/>
    </reaction>
</comment>
<comment type="catalytic activity">
    <reaction evidence="5">
        <text>dehydroepiandrosterone 3-sulfate(out) + 2 Na(+)(out) = dehydroepiandrosterone 3-sulfate(in) + 2 Na(+)(in)</text>
        <dbReference type="Rhea" id="RHEA:71091"/>
        <dbReference type="ChEBI" id="CHEBI:29101"/>
        <dbReference type="ChEBI" id="CHEBI:57905"/>
    </reaction>
</comment>
<comment type="catalytic activity">
    <reaction evidence="2">
        <text>androst-5-ene-diol 3-sulfate(out) + 2 Na(+)(out) = androst-5-ene-diol 3-sulfate(in) + 2 Na(+)(in)</text>
        <dbReference type="Rhea" id="RHEA:71099"/>
        <dbReference type="ChEBI" id="CHEBI:29101"/>
        <dbReference type="ChEBI" id="CHEBI:190287"/>
    </reaction>
</comment>
<comment type="catalytic activity">
    <reaction evidence="5">
        <text>pregnenolone sulfate(out) + 2 Na(+)(out) = pregnenolone sulfate(in) + 2 Na(+)(in)</text>
        <dbReference type="Rhea" id="RHEA:71095"/>
        <dbReference type="ChEBI" id="CHEBI:29101"/>
        <dbReference type="ChEBI" id="CHEBI:133000"/>
    </reaction>
</comment>
<comment type="catalytic activity">
    <reaction evidence="2">
        <text>taurolithocholate 3-sulfate(out) + 2 Na(+)(out) = taurolithocholate 3-sulfate(in) + 2 Na(+)(in)</text>
        <dbReference type="Rhea" id="RHEA:71275"/>
        <dbReference type="ChEBI" id="CHEBI:29101"/>
        <dbReference type="ChEBI" id="CHEBI:58301"/>
    </reaction>
</comment>
<comment type="catalytic activity">
    <reaction evidence="2">
        <text>androsterone 3alpha-sulfate(out) + 2 Na(+)(out) = androsterone 3alpha-sulfate(in) + 2 Na(+)(in)</text>
        <dbReference type="Rhea" id="RHEA:71351"/>
        <dbReference type="ChEBI" id="CHEBI:29101"/>
        <dbReference type="ChEBI" id="CHEBI:133003"/>
    </reaction>
</comment>
<comment type="catalytic activity">
    <reaction evidence="2">
        <text>5alpha-dihydrotestosterone sulfate(out) + 2 Na(+)(out) = 5alpha-dihydrotestosterone sulfate(in) + 2 Na(+)(in)</text>
        <dbReference type="Rhea" id="RHEA:71355"/>
        <dbReference type="ChEBI" id="CHEBI:29101"/>
        <dbReference type="ChEBI" id="CHEBI:136982"/>
    </reaction>
</comment>
<comment type="catalytic activity">
    <reaction evidence="2">
        <text>17beta-estradiol 17-sulfate(out) + 2 Na(+)(out) = 17beta-estradiol 17-sulfate(in) + 2 Na(+)(in)</text>
        <dbReference type="Rhea" id="RHEA:71359"/>
        <dbReference type="ChEBI" id="CHEBI:29101"/>
        <dbReference type="ChEBI" id="CHEBI:190469"/>
    </reaction>
</comment>
<comment type="catalytic activity">
    <reaction evidence="2">
        <text>17alpha-hydroxypregnenolone 3-sulfate(out) + 2 Na(+)(out) = 17alpha-hydroxypregnenolone 3-sulfate(in) + 2 Na(+)(in)</text>
        <dbReference type="Rhea" id="RHEA:71363"/>
        <dbReference type="ChEBI" id="CHEBI:29101"/>
        <dbReference type="ChEBI" id="CHEBI:133742"/>
    </reaction>
</comment>
<comment type="catalytic activity">
    <reaction evidence="2">
        <text>epiandrosterone 3-sulfate(out) + 2 Na(+)(out) = epiandrosterone 3-sulfate(in) + 2 Na(+)(in)</text>
        <dbReference type="Rhea" id="RHEA:71367"/>
        <dbReference type="ChEBI" id="CHEBI:29101"/>
        <dbReference type="ChEBI" id="CHEBI:133729"/>
    </reaction>
</comment>
<comment type="catalytic activity">
    <reaction evidence="2">
        <text>epitestosterone 17-sulfate(out) + 2 Na(+)(out) = epitestosterone 17-sulfate(in) + 2 Na(+)(in)</text>
        <dbReference type="Rhea" id="RHEA:71371"/>
        <dbReference type="ChEBI" id="CHEBI:29101"/>
        <dbReference type="ChEBI" id="CHEBI:190485"/>
    </reaction>
</comment>
<comment type="catalytic activity">
    <reaction evidence="2">
        <text>testosterone 17-sulfate(out) + 2 Na(+)(out) = testosterone 17-sulfate(in) + 2 Na(+)(in)</text>
        <dbReference type="Rhea" id="RHEA:71375"/>
        <dbReference type="ChEBI" id="CHEBI:29101"/>
        <dbReference type="ChEBI" id="CHEBI:190489"/>
    </reaction>
</comment>
<comment type="catalytic activity">
    <reaction evidence="2">
        <text>16alpha-hydroxydehydroepiandrosterone 3-sulfate(out) + 2 Na(+)(out) = 16alpha-hydroxydehydroepiandrosterone 3-sulfate(in) + 2 Na(+)(in)</text>
        <dbReference type="Rhea" id="RHEA:71391"/>
        <dbReference type="ChEBI" id="CHEBI:29101"/>
        <dbReference type="ChEBI" id="CHEBI:87538"/>
    </reaction>
</comment>
<comment type="biophysicochemical properties">
    <kinetics>
        <KM evidence="5">60.3 uM for dehydroepiandrosterone 3-sulfate (DHEAS)</KM>
        <KM evidence="5">2.1 uM for estrone 3-sulfate (E1S)</KM>
        <KM evidence="5">2.5 uM for pregnenolone sulfate (PREGS)</KM>
        <Vmax evidence="5">362.8 pmol/min/mg enzyme with dehydroepiandrosterone 3-sulfate (DHEAS) as substrate</Vmax>
        <Vmax evidence="5">26.6 pmol/min/mg enzyme with estrone 3-sulfate (E1S) as substrate</Vmax>
        <Vmax evidence="5">377.3 pmol/min/mg enzyme with pregnenolone sulfate (PREGS) as substrate</Vmax>
    </kinetics>
</comment>
<comment type="subcellular location">
    <subcellularLocation>
        <location evidence="5">Membrane</location>
        <topology evidence="8">Multi-pass membrane protein</topology>
    </subcellularLocation>
</comment>
<comment type="tissue specificity">
    <text evidence="5">Highest expression in lung and testis, moderate expression in heart, bladder and skin, and low expression in blood, liver, stomach, small intestine, spleen, kidney, adrenal gland, seminal vesicle, preputial gland, coagulating gland, lacrimal gland/eye, and brain.</text>
</comment>
<comment type="PTM">
    <text evidence="1">Glycosylated.</text>
</comment>
<comment type="disruption phenotype">
    <text evidence="6">Knockout mice have normal reproductive phenotype, however, males show higher cholesterol sulfate serum levels than wild-type.</text>
</comment>
<comment type="miscellaneous">
    <text evidence="7">In humans, 3-beta-sulfooxy-androst-5-en-17-one (DHEAS) is the most abundant circulating steroid sulfate in the human body, it is mainly synthesized from adrenal glands and gonads, whereas rats and mice have low circulating concentrations of DHEAS in the periphery as they can only produce DHEAS in their gonads.</text>
</comment>
<comment type="similarity">
    <text evidence="8">Belongs to the bile acid:sodium symporter (BASS) (TC 2.A.28) family.</text>
</comment>
<feature type="chain" id="PRO_0000309216" description="Sodium-dependent organic anion transporter">
    <location>
        <begin position="1"/>
        <end position="373"/>
    </location>
</feature>
<feature type="topological domain" description="Extracellular" evidence="3">
    <location>
        <begin position="1"/>
        <end position="32"/>
    </location>
</feature>
<feature type="transmembrane region" description="Helical" evidence="3">
    <location>
        <begin position="33"/>
        <end position="53"/>
    </location>
</feature>
<feature type="topological domain" description="Cytoplasmic" evidence="3">
    <location>
        <begin position="54"/>
        <end position="67"/>
    </location>
</feature>
<feature type="transmembrane region" description="Helical" evidence="3">
    <location>
        <begin position="68"/>
        <end position="88"/>
    </location>
</feature>
<feature type="topological domain" description="Extracellular" evidence="3">
    <location>
        <begin position="89"/>
        <end position="97"/>
    </location>
</feature>
<feature type="transmembrane region" description="Helical" evidence="3">
    <location>
        <begin position="98"/>
        <end position="118"/>
    </location>
</feature>
<feature type="topological domain" description="Cytoplasmic" evidence="3">
    <location>
        <begin position="119"/>
        <end position="126"/>
    </location>
</feature>
<feature type="transmembrane region" description="Helical" evidence="3">
    <location>
        <begin position="127"/>
        <end position="147"/>
    </location>
</feature>
<feature type="topological domain" description="Extracellular" evidence="3">
    <location>
        <begin position="148"/>
        <end position="157"/>
    </location>
</feature>
<feature type="transmembrane region" description="Helical" evidence="3">
    <location>
        <begin position="158"/>
        <end position="178"/>
    </location>
</feature>
<feature type="topological domain" description="Cytoplasmic" evidence="3">
    <location>
        <begin position="179"/>
        <end position="195"/>
    </location>
</feature>
<feature type="transmembrane region" description="Helical" evidence="3">
    <location>
        <begin position="196"/>
        <end position="216"/>
    </location>
</feature>
<feature type="topological domain" description="Extracellular" evidence="3">
    <location>
        <begin position="217"/>
        <end position="224"/>
    </location>
</feature>
<feature type="transmembrane region" description="Helical" evidence="3">
    <location>
        <begin position="225"/>
        <end position="245"/>
    </location>
</feature>
<feature type="topological domain" description="Cytoplasmic" evidence="3">
    <location>
        <begin position="246"/>
        <end position="265"/>
    </location>
</feature>
<feature type="transmembrane region" description="Helical" evidence="3">
    <location>
        <begin position="266"/>
        <end position="283"/>
    </location>
</feature>
<feature type="topological domain" description="Extracellular" evidence="3">
    <location>
        <position position="284"/>
    </location>
</feature>
<feature type="transmembrane region" description="Helical" evidence="3">
    <location>
        <begin position="285"/>
        <end position="305"/>
    </location>
</feature>
<feature type="topological domain" description="Cytoplasmic" evidence="3">
    <location>
        <begin position="306"/>
        <end position="373"/>
    </location>
</feature>
<feature type="region of interest" description="Disordered" evidence="4">
    <location>
        <begin position="1"/>
        <end position="21"/>
    </location>
</feature>
<feature type="compositionally biased region" description="Polar residues" evidence="4">
    <location>
        <begin position="1"/>
        <end position="15"/>
    </location>
</feature>
<feature type="glycosylation site" description="N-linked (GlcNAc...) asparagine" evidence="3">
    <location>
        <position position="8"/>
    </location>
</feature>
<feature type="glycosylation site" description="N-linked (GlcNAc...) asparagine" evidence="3">
    <location>
        <position position="14"/>
    </location>
</feature>
<reference key="1">
    <citation type="submission" date="2003-09" db="EMBL/GenBank/DDBJ databases">
        <title>Cloning of a sodium-dependent organic anion transporter (SOAT) from mouse liver.</title>
        <authorList>
            <person name="Geyer J."/>
            <person name="Godoy J.R."/>
            <person name="Petzinger E."/>
        </authorList>
    </citation>
    <scope>NUCLEOTIDE SEQUENCE [MRNA]</scope>
    <source>
        <strain>C57BL/6J</strain>
        <tissue>Liver</tissue>
    </source>
</reference>
<reference key="2">
    <citation type="journal article" date="2005" name="Science">
        <title>The transcriptional landscape of the mammalian genome.</title>
        <authorList>
            <person name="Carninci P."/>
            <person name="Kasukawa T."/>
            <person name="Katayama S."/>
            <person name="Gough J."/>
            <person name="Frith M.C."/>
            <person name="Maeda N."/>
            <person name="Oyama R."/>
            <person name="Ravasi T."/>
            <person name="Lenhard B."/>
            <person name="Wells C."/>
            <person name="Kodzius R."/>
            <person name="Shimokawa K."/>
            <person name="Bajic V.B."/>
            <person name="Brenner S.E."/>
            <person name="Batalov S."/>
            <person name="Forrest A.R."/>
            <person name="Zavolan M."/>
            <person name="Davis M.J."/>
            <person name="Wilming L.G."/>
            <person name="Aidinis V."/>
            <person name="Allen J.E."/>
            <person name="Ambesi-Impiombato A."/>
            <person name="Apweiler R."/>
            <person name="Aturaliya R.N."/>
            <person name="Bailey T.L."/>
            <person name="Bansal M."/>
            <person name="Baxter L."/>
            <person name="Beisel K.W."/>
            <person name="Bersano T."/>
            <person name="Bono H."/>
            <person name="Chalk A.M."/>
            <person name="Chiu K.P."/>
            <person name="Choudhary V."/>
            <person name="Christoffels A."/>
            <person name="Clutterbuck D.R."/>
            <person name="Crowe M.L."/>
            <person name="Dalla E."/>
            <person name="Dalrymple B.P."/>
            <person name="de Bono B."/>
            <person name="Della Gatta G."/>
            <person name="di Bernardo D."/>
            <person name="Down T."/>
            <person name="Engstrom P."/>
            <person name="Fagiolini M."/>
            <person name="Faulkner G."/>
            <person name="Fletcher C.F."/>
            <person name="Fukushima T."/>
            <person name="Furuno M."/>
            <person name="Futaki S."/>
            <person name="Gariboldi M."/>
            <person name="Georgii-Hemming P."/>
            <person name="Gingeras T.R."/>
            <person name="Gojobori T."/>
            <person name="Green R.E."/>
            <person name="Gustincich S."/>
            <person name="Harbers M."/>
            <person name="Hayashi Y."/>
            <person name="Hensch T.K."/>
            <person name="Hirokawa N."/>
            <person name="Hill D."/>
            <person name="Huminiecki L."/>
            <person name="Iacono M."/>
            <person name="Ikeo K."/>
            <person name="Iwama A."/>
            <person name="Ishikawa T."/>
            <person name="Jakt M."/>
            <person name="Kanapin A."/>
            <person name="Katoh M."/>
            <person name="Kawasawa Y."/>
            <person name="Kelso J."/>
            <person name="Kitamura H."/>
            <person name="Kitano H."/>
            <person name="Kollias G."/>
            <person name="Krishnan S.P."/>
            <person name="Kruger A."/>
            <person name="Kummerfeld S.K."/>
            <person name="Kurochkin I.V."/>
            <person name="Lareau L.F."/>
            <person name="Lazarevic D."/>
            <person name="Lipovich L."/>
            <person name="Liu J."/>
            <person name="Liuni S."/>
            <person name="McWilliam S."/>
            <person name="Madan Babu M."/>
            <person name="Madera M."/>
            <person name="Marchionni L."/>
            <person name="Matsuda H."/>
            <person name="Matsuzawa S."/>
            <person name="Miki H."/>
            <person name="Mignone F."/>
            <person name="Miyake S."/>
            <person name="Morris K."/>
            <person name="Mottagui-Tabar S."/>
            <person name="Mulder N."/>
            <person name="Nakano N."/>
            <person name="Nakauchi H."/>
            <person name="Ng P."/>
            <person name="Nilsson R."/>
            <person name="Nishiguchi S."/>
            <person name="Nishikawa S."/>
            <person name="Nori F."/>
            <person name="Ohara O."/>
            <person name="Okazaki Y."/>
            <person name="Orlando V."/>
            <person name="Pang K.C."/>
            <person name="Pavan W.J."/>
            <person name="Pavesi G."/>
            <person name="Pesole G."/>
            <person name="Petrovsky N."/>
            <person name="Piazza S."/>
            <person name="Reed J."/>
            <person name="Reid J.F."/>
            <person name="Ring B.Z."/>
            <person name="Ringwald M."/>
            <person name="Rost B."/>
            <person name="Ruan Y."/>
            <person name="Salzberg S.L."/>
            <person name="Sandelin A."/>
            <person name="Schneider C."/>
            <person name="Schoenbach C."/>
            <person name="Sekiguchi K."/>
            <person name="Semple C.A."/>
            <person name="Seno S."/>
            <person name="Sessa L."/>
            <person name="Sheng Y."/>
            <person name="Shibata Y."/>
            <person name="Shimada H."/>
            <person name="Shimada K."/>
            <person name="Silva D."/>
            <person name="Sinclair B."/>
            <person name="Sperling S."/>
            <person name="Stupka E."/>
            <person name="Sugiura K."/>
            <person name="Sultana R."/>
            <person name="Takenaka Y."/>
            <person name="Taki K."/>
            <person name="Tammoja K."/>
            <person name="Tan S.L."/>
            <person name="Tang S."/>
            <person name="Taylor M.S."/>
            <person name="Tegner J."/>
            <person name="Teichmann S.A."/>
            <person name="Ueda H.R."/>
            <person name="van Nimwegen E."/>
            <person name="Verardo R."/>
            <person name="Wei C.L."/>
            <person name="Yagi K."/>
            <person name="Yamanishi H."/>
            <person name="Zabarovsky E."/>
            <person name="Zhu S."/>
            <person name="Zimmer A."/>
            <person name="Hide W."/>
            <person name="Bult C."/>
            <person name="Grimmond S.M."/>
            <person name="Teasdale R.D."/>
            <person name="Liu E.T."/>
            <person name="Brusic V."/>
            <person name="Quackenbush J."/>
            <person name="Wahlestedt C."/>
            <person name="Mattick J.S."/>
            <person name="Hume D.A."/>
            <person name="Kai C."/>
            <person name="Sasaki D."/>
            <person name="Tomaru Y."/>
            <person name="Fukuda S."/>
            <person name="Kanamori-Katayama M."/>
            <person name="Suzuki M."/>
            <person name="Aoki J."/>
            <person name="Arakawa T."/>
            <person name="Iida J."/>
            <person name="Imamura K."/>
            <person name="Itoh M."/>
            <person name="Kato T."/>
            <person name="Kawaji H."/>
            <person name="Kawagashira N."/>
            <person name="Kawashima T."/>
            <person name="Kojima M."/>
            <person name="Kondo S."/>
            <person name="Konno H."/>
            <person name="Nakano K."/>
            <person name="Ninomiya N."/>
            <person name="Nishio T."/>
            <person name="Okada M."/>
            <person name="Plessy C."/>
            <person name="Shibata K."/>
            <person name="Shiraki T."/>
            <person name="Suzuki S."/>
            <person name="Tagami M."/>
            <person name="Waki K."/>
            <person name="Watahiki A."/>
            <person name="Okamura-Oho Y."/>
            <person name="Suzuki H."/>
            <person name="Kawai J."/>
            <person name="Hayashizaki Y."/>
        </authorList>
    </citation>
    <scope>NUCLEOTIDE SEQUENCE [LARGE SCALE MRNA]</scope>
    <source>
        <strain>C57BL/6J</strain>
        <tissue>Lung</tissue>
    </source>
</reference>
<reference key="3">
    <citation type="journal article" date="2004" name="Genome Res.">
        <title>The status, quality, and expansion of the NIH full-length cDNA project: the Mammalian Gene Collection (MGC).</title>
        <authorList>
            <consortium name="The MGC Project Team"/>
        </authorList>
    </citation>
    <scope>NUCLEOTIDE SEQUENCE [LARGE SCALE MRNA]</scope>
    <source>
        <tissue>Brain</tissue>
    </source>
</reference>
<reference key="4">
    <citation type="journal article" date="2013" name="J. Steroid Biochem. Mol. Biol.">
        <title>Cloning and functional characterization of the mouse sodium-dependent organic anion transporter Soat (Slc10a6).</title>
        <authorList>
            <person name="Grosser G."/>
            <person name="Fietz D."/>
            <person name="Guenther S."/>
            <person name="Bakhaus K."/>
            <person name="Schweigmann H."/>
            <person name="Ugele B."/>
            <person name="Brehm R."/>
            <person name="Petzinger E."/>
            <person name="Bergmann M."/>
            <person name="Geyer J."/>
        </authorList>
    </citation>
    <scope>FUNCTION</scope>
    <scope>TRANSPORTER ACTIVITY</scope>
    <scope>BIOPHYSICOCHEMICAL PROPERTIES</scope>
    <scope>TISSUE SPECIFICITY</scope>
    <scope>SUBCELLULAR LOCATION</scope>
</reference>
<reference key="5">
    <citation type="journal article" date="2018" name="J. Steroid Biochem. Mol. Biol.">
        <title>Sodium-dependent organic anion transporter (Slc10a6-/-) knockout mice show normal spermatogenesis and reproduction, but elevated serum levels for cholesterol sulfate.</title>
        <authorList>
            <person name="Bakhaus K."/>
            <person name="Bennien J."/>
            <person name="Fietz D."/>
            <person name="Sanchez-Guijo A."/>
            <person name="Hartmann M."/>
            <person name="Serafini R."/>
            <person name="Love C.C."/>
            <person name="Golovko A."/>
            <person name="Wudy S.A."/>
            <person name="Bergmann M."/>
            <person name="Geyer J."/>
        </authorList>
    </citation>
    <scope>DISRUPTION PHENOTYPE</scope>
</reference>